<dbReference type="EMBL" id="AE013599">
    <property type="protein sequence ID" value="AAF58348.1"/>
    <property type="molecule type" value="Genomic_DNA"/>
</dbReference>
<dbReference type="EMBL" id="BT082048">
    <property type="protein sequence ID" value="ACO95726.1"/>
    <property type="molecule type" value="mRNA"/>
</dbReference>
<dbReference type="EMBL" id="BT133178">
    <property type="protein sequence ID" value="AEZ68806.1"/>
    <property type="molecule type" value="mRNA"/>
</dbReference>
<dbReference type="RefSeq" id="NP_610891.1">
    <property type="nucleotide sequence ID" value="NM_137047.3"/>
</dbReference>
<dbReference type="SMR" id="A1Z9G2"/>
<dbReference type="FunCoup" id="A1Z9G2">
    <property type="interactions" value="2187"/>
</dbReference>
<dbReference type="IntAct" id="A1Z9G2">
    <property type="interactions" value="14"/>
</dbReference>
<dbReference type="STRING" id="7227.FBpp0086749"/>
<dbReference type="PaxDb" id="7227-FBpp0086749"/>
<dbReference type="DNASU" id="36514"/>
<dbReference type="EnsemblMetazoa" id="FBtr0087623">
    <property type="protein sequence ID" value="FBpp0086749"/>
    <property type="gene ID" value="FBgn0033859"/>
</dbReference>
<dbReference type="GeneID" id="36514"/>
<dbReference type="KEGG" id="dme:Dmel_CG6197"/>
<dbReference type="UCSC" id="CG6197-RA">
    <property type="organism name" value="d. melanogaster"/>
</dbReference>
<dbReference type="AGR" id="FB:FBgn0033859"/>
<dbReference type="CTD" id="36514"/>
<dbReference type="FlyBase" id="FBgn0033859">
    <property type="gene designation" value="fand"/>
</dbReference>
<dbReference type="VEuPathDB" id="VectorBase:FBgn0033859"/>
<dbReference type="eggNOG" id="KOG2047">
    <property type="taxonomic scope" value="Eukaryota"/>
</dbReference>
<dbReference type="GeneTree" id="ENSGT00550000075140"/>
<dbReference type="HOGENOM" id="CLU_007736_0_0_1"/>
<dbReference type="InParanoid" id="A1Z9G2"/>
<dbReference type="OMA" id="IWYNYLR"/>
<dbReference type="OrthoDB" id="10067343at2759"/>
<dbReference type="PhylomeDB" id="A1Z9G2"/>
<dbReference type="Reactome" id="R-DME-6781823">
    <property type="pathway name" value="Formation of TC-NER Pre-Incision Complex"/>
</dbReference>
<dbReference type="Reactome" id="R-DME-6782135">
    <property type="pathway name" value="Dual incision in TC-NER"/>
</dbReference>
<dbReference type="Reactome" id="R-DME-6782210">
    <property type="pathway name" value="Gap-filling DNA repair synthesis and ligation in TC-NER"/>
</dbReference>
<dbReference type="Reactome" id="R-DME-72163">
    <property type="pathway name" value="mRNA Splicing - Major Pathway"/>
</dbReference>
<dbReference type="SignaLink" id="A1Z9G2"/>
<dbReference type="BioGRID-ORCS" id="36514">
    <property type="hits" value="1 hit in 1 CRISPR screen"/>
</dbReference>
<dbReference type="ChiTaRS" id="fas">
    <property type="organism name" value="fly"/>
</dbReference>
<dbReference type="GenomeRNAi" id="36514"/>
<dbReference type="PRO" id="PR:A1Z9G2"/>
<dbReference type="Proteomes" id="UP000000803">
    <property type="component" value="Chromosome 2R"/>
</dbReference>
<dbReference type="Bgee" id="FBgn0033859">
    <property type="expression patterns" value="Expressed in adult enterocyte in adult thorax and 50 other cell types or tissues"/>
</dbReference>
<dbReference type="GO" id="GO:0071013">
    <property type="term" value="C:catalytic step 2 spliceosome"/>
    <property type="evidence" value="ECO:0007005"/>
    <property type="project" value="FlyBase"/>
</dbReference>
<dbReference type="GO" id="GO:0005634">
    <property type="term" value="C:nucleus"/>
    <property type="evidence" value="ECO:0000305"/>
    <property type="project" value="FlyBase"/>
</dbReference>
<dbReference type="GO" id="GO:0071014">
    <property type="term" value="C:post-mRNA release spliceosomal complex"/>
    <property type="evidence" value="ECO:0000318"/>
    <property type="project" value="GO_Central"/>
</dbReference>
<dbReference type="GO" id="GO:0071011">
    <property type="term" value="C:precatalytic spliceosome"/>
    <property type="evidence" value="ECO:0007005"/>
    <property type="project" value="FlyBase"/>
</dbReference>
<dbReference type="GO" id="GO:0000974">
    <property type="term" value="C:Prp19 complex"/>
    <property type="evidence" value="ECO:0000314"/>
    <property type="project" value="FlyBase"/>
</dbReference>
<dbReference type="GO" id="GO:0071007">
    <property type="term" value="C:U2-type catalytic step 2 spliceosome"/>
    <property type="evidence" value="ECO:0000318"/>
    <property type="project" value="GO_Central"/>
</dbReference>
<dbReference type="GO" id="GO:0007510">
    <property type="term" value="P:cardioblast cell fate determination"/>
    <property type="evidence" value="ECO:0000315"/>
    <property type="project" value="FlyBase"/>
</dbReference>
<dbReference type="GO" id="GO:0000349">
    <property type="term" value="P:generation of catalytic spliceosome for first transesterification step"/>
    <property type="evidence" value="ECO:0000318"/>
    <property type="project" value="GO_Central"/>
</dbReference>
<dbReference type="GO" id="GO:0007443">
    <property type="term" value="P:Malpighian tubule morphogenesis"/>
    <property type="evidence" value="ECO:0000315"/>
    <property type="project" value="FlyBase"/>
</dbReference>
<dbReference type="GO" id="GO:0002009">
    <property type="term" value="P:morphogenesis of an epithelium"/>
    <property type="evidence" value="ECO:0000315"/>
    <property type="project" value="FlyBase"/>
</dbReference>
<dbReference type="GO" id="GO:0000398">
    <property type="term" value="P:mRNA splicing, via spliceosome"/>
    <property type="evidence" value="ECO:0000318"/>
    <property type="project" value="GO_Central"/>
</dbReference>
<dbReference type="GO" id="GO:0000381">
    <property type="term" value="P:regulation of alternative mRNA splicing, via spliceosome"/>
    <property type="evidence" value="ECO:0007001"/>
    <property type="project" value="FlyBase"/>
</dbReference>
<dbReference type="GO" id="GO:0008380">
    <property type="term" value="P:RNA splicing"/>
    <property type="evidence" value="ECO:0000315"/>
    <property type="project" value="FlyBase"/>
</dbReference>
<dbReference type="FunFam" id="1.25.40.10:FF:000023">
    <property type="entry name" value="Pre-mRNA-splicing factor SYF1"/>
    <property type="match status" value="1"/>
</dbReference>
<dbReference type="FunFam" id="1.25.40.10:FF:000220">
    <property type="entry name" value="Pre-mRNA-splicing factor SYF1"/>
    <property type="match status" value="1"/>
</dbReference>
<dbReference type="FunFam" id="1.25.40.10:FF:000137">
    <property type="entry name" value="Pre-mRNA-splicing factor syf1"/>
    <property type="match status" value="1"/>
</dbReference>
<dbReference type="FunFam" id="1.25.40.10:FF:000411">
    <property type="entry name" value="pre-mRNA-splicing factor SYF1"/>
    <property type="match status" value="1"/>
</dbReference>
<dbReference type="FunFam" id="1.25.40.10:FF:002016">
    <property type="entry name" value="Pre-mRNA-splicing factor SYF1-like Protein"/>
    <property type="match status" value="1"/>
</dbReference>
<dbReference type="Gene3D" id="1.25.40.10">
    <property type="entry name" value="Tetratricopeptide repeat domain"/>
    <property type="match status" value="3"/>
</dbReference>
<dbReference type="InterPro" id="IPR003107">
    <property type="entry name" value="HAT"/>
</dbReference>
<dbReference type="InterPro" id="IPR055433">
    <property type="entry name" value="HAT_Syf1-like_N"/>
</dbReference>
<dbReference type="InterPro" id="IPR056350">
    <property type="entry name" value="HAT_Syf1_central"/>
</dbReference>
<dbReference type="InterPro" id="IPR055430">
    <property type="entry name" value="HAT_Syf1_CNRKL1_C"/>
</dbReference>
<dbReference type="InterPro" id="IPR045075">
    <property type="entry name" value="Syf1-like"/>
</dbReference>
<dbReference type="InterPro" id="IPR011990">
    <property type="entry name" value="TPR-like_helical_dom_sf"/>
</dbReference>
<dbReference type="PANTHER" id="PTHR11246">
    <property type="entry name" value="PRE-MRNA SPLICING FACTOR"/>
    <property type="match status" value="1"/>
</dbReference>
<dbReference type="PANTHER" id="PTHR11246:SF5">
    <property type="entry name" value="PRE-MRNA-SPLICING FACTOR SYF1"/>
    <property type="match status" value="1"/>
</dbReference>
<dbReference type="Pfam" id="PF23231">
    <property type="entry name" value="HAT_Syf1_CNRKL1_C"/>
    <property type="match status" value="1"/>
</dbReference>
<dbReference type="Pfam" id="PF23233">
    <property type="entry name" value="HAT_Syf1_CNRKL1_N"/>
    <property type="match status" value="1"/>
</dbReference>
<dbReference type="Pfam" id="PF23220">
    <property type="entry name" value="HAT_Syf1_M"/>
    <property type="match status" value="1"/>
</dbReference>
<dbReference type="SMART" id="SM00386">
    <property type="entry name" value="HAT"/>
    <property type="match status" value="13"/>
</dbReference>
<dbReference type="SUPFAM" id="SSF48452">
    <property type="entry name" value="TPR-like"/>
    <property type="match status" value="5"/>
</dbReference>
<evidence type="ECO:0000250" key="1">
    <source>
        <dbReference type="UniProtKB" id="Q9HCS7"/>
    </source>
</evidence>
<evidence type="ECO:0000255" key="2"/>
<evidence type="ECO:0000256" key="3">
    <source>
        <dbReference type="SAM" id="MobiDB-lite"/>
    </source>
</evidence>
<evidence type="ECO:0000269" key="4">
    <source>
    </source>
</evidence>
<evidence type="ECO:0000269" key="5">
    <source>
    </source>
</evidence>
<evidence type="ECO:0000269" key="6">
    <source>
    </source>
</evidence>
<evidence type="ECO:0000303" key="7">
    <source>
    </source>
</evidence>
<evidence type="ECO:0000303" key="8">
    <source>
    </source>
</evidence>
<evidence type="ECO:0000305" key="9"/>
<evidence type="ECO:0000312" key="10">
    <source>
        <dbReference type="EMBL" id="ACO95726.1"/>
    </source>
</evidence>
<evidence type="ECO:0000312" key="11">
    <source>
        <dbReference type="EMBL" id="AEZ68806.1"/>
    </source>
</evidence>
<evidence type="ECO:0000312" key="12">
    <source>
        <dbReference type="FlyBase" id="FBgn0033859"/>
    </source>
</evidence>
<evidence type="ECO:0000312" key="13">
    <source>
        <dbReference type="Proteomes" id="UP000000803"/>
    </source>
</evidence>
<proteinExistence type="evidence at protein level"/>
<reference evidence="13" key="1">
    <citation type="journal article" date="2000" name="Science">
        <title>The genome sequence of Drosophila melanogaster.</title>
        <authorList>
            <person name="Adams M.D."/>
            <person name="Celniker S.E."/>
            <person name="Holt R.A."/>
            <person name="Evans C.A."/>
            <person name="Gocayne J.D."/>
            <person name="Amanatides P.G."/>
            <person name="Scherer S.E."/>
            <person name="Li P.W."/>
            <person name="Hoskins R.A."/>
            <person name="Galle R.F."/>
            <person name="George R.A."/>
            <person name="Lewis S.E."/>
            <person name="Richards S."/>
            <person name="Ashburner M."/>
            <person name="Henderson S.N."/>
            <person name="Sutton G.G."/>
            <person name="Wortman J.R."/>
            <person name="Yandell M.D."/>
            <person name="Zhang Q."/>
            <person name="Chen L.X."/>
            <person name="Brandon R.C."/>
            <person name="Rogers Y.-H.C."/>
            <person name="Blazej R.G."/>
            <person name="Champe M."/>
            <person name="Pfeiffer B.D."/>
            <person name="Wan K.H."/>
            <person name="Doyle C."/>
            <person name="Baxter E.G."/>
            <person name="Helt G."/>
            <person name="Nelson C.R."/>
            <person name="Miklos G.L.G."/>
            <person name="Abril J.F."/>
            <person name="Agbayani A."/>
            <person name="An H.-J."/>
            <person name="Andrews-Pfannkoch C."/>
            <person name="Baldwin D."/>
            <person name="Ballew R.M."/>
            <person name="Basu A."/>
            <person name="Baxendale J."/>
            <person name="Bayraktaroglu L."/>
            <person name="Beasley E.M."/>
            <person name="Beeson K.Y."/>
            <person name="Benos P.V."/>
            <person name="Berman B.P."/>
            <person name="Bhandari D."/>
            <person name="Bolshakov S."/>
            <person name="Borkova D."/>
            <person name="Botchan M.R."/>
            <person name="Bouck J."/>
            <person name="Brokstein P."/>
            <person name="Brottier P."/>
            <person name="Burtis K.C."/>
            <person name="Busam D.A."/>
            <person name="Butler H."/>
            <person name="Cadieu E."/>
            <person name="Center A."/>
            <person name="Chandra I."/>
            <person name="Cherry J.M."/>
            <person name="Cawley S."/>
            <person name="Dahlke C."/>
            <person name="Davenport L.B."/>
            <person name="Davies P."/>
            <person name="de Pablos B."/>
            <person name="Delcher A."/>
            <person name="Deng Z."/>
            <person name="Mays A.D."/>
            <person name="Dew I."/>
            <person name="Dietz S.M."/>
            <person name="Dodson K."/>
            <person name="Doup L.E."/>
            <person name="Downes M."/>
            <person name="Dugan-Rocha S."/>
            <person name="Dunkov B.C."/>
            <person name="Dunn P."/>
            <person name="Durbin K.J."/>
            <person name="Evangelista C.C."/>
            <person name="Ferraz C."/>
            <person name="Ferriera S."/>
            <person name="Fleischmann W."/>
            <person name="Fosler C."/>
            <person name="Gabrielian A.E."/>
            <person name="Garg N.S."/>
            <person name="Gelbart W.M."/>
            <person name="Glasser K."/>
            <person name="Glodek A."/>
            <person name="Gong F."/>
            <person name="Gorrell J.H."/>
            <person name="Gu Z."/>
            <person name="Guan P."/>
            <person name="Harris M."/>
            <person name="Harris N.L."/>
            <person name="Harvey D.A."/>
            <person name="Heiman T.J."/>
            <person name="Hernandez J.R."/>
            <person name="Houck J."/>
            <person name="Hostin D."/>
            <person name="Houston K.A."/>
            <person name="Howland T.J."/>
            <person name="Wei M.-H."/>
            <person name="Ibegwam C."/>
            <person name="Jalali M."/>
            <person name="Kalush F."/>
            <person name="Karpen G.H."/>
            <person name="Ke Z."/>
            <person name="Kennison J.A."/>
            <person name="Ketchum K.A."/>
            <person name="Kimmel B.E."/>
            <person name="Kodira C.D."/>
            <person name="Kraft C.L."/>
            <person name="Kravitz S."/>
            <person name="Kulp D."/>
            <person name="Lai Z."/>
            <person name="Lasko P."/>
            <person name="Lei Y."/>
            <person name="Levitsky A.A."/>
            <person name="Li J.H."/>
            <person name="Li Z."/>
            <person name="Liang Y."/>
            <person name="Lin X."/>
            <person name="Liu X."/>
            <person name="Mattei B."/>
            <person name="McIntosh T.C."/>
            <person name="McLeod M.P."/>
            <person name="McPherson D."/>
            <person name="Merkulov G."/>
            <person name="Milshina N.V."/>
            <person name="Mobarry C."/>
            <person name="Morris J."/>
            <person name="Moshrefi A."/>
            <person name="Mount S.M."/>
            <person name="Moy M."/>
            <person name="Murphy B."/>
            <person name="Murphy L."/>
            <person name="Muzny D.M."/>
            <person name="Nelson D.L."/>
            <person name="Nelson D.R."/>
            <person name="Nelson K.A."/>
            <person name="Nixon K."/>
            <person name="Nusskern D.R."/>
            <person name="Pacleb J.M."/>
            <person name="Palazzolo M."/>
            <person name="Pittman G.S."/>
            <person name="Pan S."/>
            <person name="Pollard J."/>
            <person name="Puri V."/>
            <person name="Reese M.G."/>
            <person name="Reinert K."/>
            <person name="Remington K."/>
            <person name="Saunders R.D.C."/>
            <person name="Scheeler F."/>
            <person name="Shen H."/>
            <person name="Shue B.C."/>
            <person name="Siden-Kiamos I."/>
            <person name="Simpson M."/>
            <person name="Skupski M.P."/>
            <person name="Smith T.J."/>
            <person name="Spier E."/>
            <person name="Spradling A.C."/>
            <person name="Stapleton M."/>
            <person name="Strong R."/>
            <person name="Sun E."/>
            <person name="Svirskas R."/>
            <person name="Tector C."/>
            <person name="Turner R."/>
            <person name="Venter E."/>
            <person name="Wang A.H."/>
            <person name="Wang X."/>
            <person name="Wang Z.-Y."/>
            <person name="Wassarman D.A."/>
            <person name="Weinstock G.M."/>
            <person name="Weissenbach J."/>
            <person name="Williams S.M."/>
            <person name="Woodage T."/>
            <person name="Worley K.C."/>
            <person name="Wu D."/>
            <person name="Yang S."/>
            <person name="Yao Q.A."/>
            <person name="Ye J."/>
            <person name="Yeh R.-F."/>
            <person name="Zaveri J.S."/>
            <person name="Zhan M."/>
            <person name="Zhang G."/>
            <person name="Zhao Q."/>
            <person name="Zheng L."/>
            <person name="Zheng X.H."/>
            <person name="Zhong F.N."/>
            <person name="Zhong W."/>
            <person name="Zhou X."/>
            <person name="Zhu S.C."/>
            <person name="Zhu X."/>
            <person name="Smith H.O."/>
            <person name="Gibbs R.A."/>
            <person name="Myers E.W."/>
            <person name="Rubin G.M."/>
            <person name="Venter J.C."/>
        </authorList>
    </citation>
    <scope>NUCLEOTIDE SEQUENCE [LARGE SCALE GENOMIC DNA]</scope>
    <source>
        <strain evidence="13">Berkeley</strain>
    </source>
</reference>
<reference evidence="13" key="2">
    <citation type="journal article" date="2002" name="Genome Biol.">
        <title>Annotation of the Drosophila melanogaster euchromatic genome: a systematic review.</title>
        <authorList>
            <person name="Misra S."/>
            <person name="Crosby M.A."/>
            <person name="Mungall C.J."/>
            <person name="Matthews B.B."/>
            <person name="Campbell K.S."/>
            <person name="Hradecky P."/>
            <person name="Huang Y."/>
            <person name="Kaminker J.S."/>
            <person name="Millburn G.H."/>
            <person name="Prochnik S.E."/>
            <person name="Smith C.D."/>
            <person name="Tupy J.L."/>
            <person name="Whitfield E.J."/>
            <person name="Bayraktaroglu L."/>
            <person name="Berman B.P."/>
            <person name="Bettencourt B.R."/>
            <person name="Celniker S.E."/>
            <person name="de Grey A.D.N.J."/>
            <person name="Drysdale R.A."/>
            <person name="Harris N.L."/>
            <person name="Richter J."/>
            <person name="Russo S."/>
            <person name="Schroeder A.J."/>
            <person name="Shu S.Q."/>
            <person name="Stapleton M."/>
            <person name="Yamada C."/>
            <person name="Ashburner M."/>
            <person name="Gelbart W.M."/>
            <person name="Rubin G.M."/>
            <person name="Lewis S.E."/>
        </authorList>
    </citation>
    <scope>GENOME REANNOTATION</scope>
    <source>
        <strain evidence="13">Berkeley</strain>
    </source>
</reference>
<reference evidence="10 11" key="3">
    <citation type="submission" date="2012-02" db="EMBL/GenBank/DDBJ databases">
        <authorList>
            <person name="Carlson J."/>
            <person name="Booth B."/>
            <person name="Frise E."/>
            <person name="Park S."/>
            <person name="Wan K."/>
            <person name="Yu C."/>
            <person name="Celniker S."/>
        </authorList>
    </citation>
    <scope>NUCLEOTIDE SEQUENCE [LARGE SCALE MRNA]</scope>
    <source>
        <strain evidence="10 11">Berkeley</strain>
        <tissue evidence="10">Embryo</tissue>
    </source>
</reference>
<reference evidence="9" key="4">
    <citation type="journal article" date="1999" name="Dev. Genes Evol.">
        <title>Mutations that alter the morphology of the malpighian tubules in Drosophila.</title>
        <authorList>
            <person name="Jack J."/>
            <person name="Myette G."/>
        </authorList>
    </citation>
    <scope>FUNCTION</scope>
    <scope>MUTAGENESIS OF 69-TRP--GLU-883</scope>
</reference>
<reference evidence="9" key="5">
    <citation type="journal article" date="2014" name="Elife">
        <title>Requirement for highly efficient pre-mRNA splicing during Drosophila early embryonic development.</title>
        <authorList>
            <person name="Guilgur L.G."/>
            <person name="Prudencio P."/>
            <person name="Sobral D."/>
            <person name="Liszekova D."/>
            <person name="Rosa A."/>
            <person name="Martinho R.G."/>
        </authorList>
    </citation>
    <scope>FUNCTION</scope>
    <scope>INTERACTION WITH CG9667 AND PRP19</scope>
    <scope>SUBCELLULAR LOCATION</scope>
    <scope>DEVELOPMENTAL STAGE</scope>
    <scope>MUTAGENESIS OF 355-ASN--HIS-360 AND ALA-401</scope>
</reference>
<reference evidence="9" key="6">
    <citation type="journal article" date="2017" name="Development">
        <title>Faithful mRNA splicing depends on the Prp19 complex subunit faint sausage and is required for tracheal branching morphogenesis in Drosophila.</title>
        <authorList>
            <person name="Sauerwald J."/>
            <person name="Soneson C."/>
            <person name="Robinson M.D."/>
            <person name="Luschnig S."/>
        </authorList>
    </citation>
    <scope>FUNCTION</scope>
    <scope>MUTAGENESIS OF 69-TRP--GLU-883 AND 219-TRP--GLU-883</scope>
</reference>
<organism evidence="13">
    <name type="scientific">Drosophila melanogaster</name>
    <name type="common">Fruit fly</name>
    <dbReference type="NCBI Taxonomy" id="7227"/>
    <lineage>
        <taxon>Eukaryota</taxon>
        <taxon>Metazoa</taxon>
        <taxon>Ecdysozoa</taxon>
        <taxon>Arthropoda</taxon>
        <taxon>Hexapoda</taxon>
        <taxon>Insecta</taxon>
        <taxon>Pterygota</taxon>
        <taxon>Neoptera</taxon>
        <taxon>Endopterygota</taxon>
        <taxon>Diptera</taxon>
        <taxon>Brachycera</taxon>
        <taxon>Muscomorpha</taxon>
        <taxon>Ephydroidea</taxon>
        <taxon>Drosophilidae</taxon>
        <taxon>Drosophila</taxon>
        <taxon>Sophophora</taxon>
    </lineage>
</organism>
<comment type="function">
    <text evidence="4 5 6">Subunit of the NTC(Nineteen)/Prp19 complex, which is part of the spliceosome (PubMed:24755291, PubMed:28087625). The complex participates in spliceosome assembly, its remodeling and is required for efficient spliceosome activation (PubMed:24755291, PubMed:28087625). Essential for efficient pre-mRNA splicing (PubMed:24755291, PubMed:28087625). In embryos, efficient pre-mRNA splicing of zygotic transcripts is essential during dynamic cellular processes that require rapid division and/or dramatic changes in gene expression such as blastoderm cellularization, tracheal branching morphogenesis, Malpighian morphogenesis and epidermal development (PubMed:10502111, PubMed:24755291, PubMed:28087625). Part of its role in promoting embryo tracheal development is also due to specifically splicing bnl transcripts which results in the activation of the BNL-FGF pathway (PubMed:28087625).</text>
</comment>
<comment type="subunit">
    <text evidence="5">Component of the NTC(Nineteen)/Prp19 complex composed of at least fand, Prp19,CG9667/ISY1 and Cdc5/CDC5L. Within the complex, interacts with Prp19 and ISY1/CG9667.</text>
</comment>
<comment type="subcellular location">
    <subcellularLocation>
        <location evidence="5">Nucleus</location>
    </subcellularLocation>
</comment>
<comment type="developmental stage">
    <text evidence="5">Expressed in adult ovaries and 0-3 hours embryos (at protein level).</text>
</comment>
<comment type="miscellaneous">
    <text evidence="5 7">Named 'fandango' after the Iberian folk dance to highlight the similarity of the blastoderm cellularization phenotype to the charleston/kuk phenotype (PubMed:24755291). The phenotype 'faint sausage (fas)', consisting of a poorly differentiated cuticle and head, was previously associated with the immunoglobulin domain protein CG17716 but is now known to be caused by mutations in the protein 'fandango' (PubMed:24755291).</text>
</comment>
<comment type="similarity">
    <text evidence="9">Belongs to the crooked-neck family.</text>
</comment>
<gene>
    <name evidence="7 12" type="primary">fand</name>
    <name evidence="8" type="synonym">fas</name>
    <name evidence="12" type="ORF">CG6197</name>
</gene>
<accession>A1Z9G2</accession>
<accession>C3KGI3</accession>
<sequence length="883" mass="103327">MVTKTIKSLNLEINFEVEDVPYEEEILRNAYSVKHWLRYIDHKAKAPNNGVNMVYERALKELPGSYKIWHNYLRTRRKQVRGKIPTDPMYEEVNSAFERALVFMHKMPRIWMDYGAFMTSQCKITRTRHVFDRALRALPITQHGRIWPLYLQFVRRFEMPETALRVYRRYLKLFPEDTEEYVDYLQEADRLDEAAQQLAHIVDNEHFVSKHGKSNHQLWNELCDLISKNPHKVHSLNVDAIIRGGLRRYTDQLGHLWNSLADYYVRSGLFDRARDIYEEAIQTVTTVRDFTQVFDEYAQFEELSLNRRMEQVAANEAATEEDDIDVELRLSRFEYLMERRLLLLNSVLLRQNPHNVHEWHKRVTLYEDKPAEIISTYTEAVQTVQPKQAVGKLHTLWVEFAKFYEANGQVEDARVVFERGTEVEYVKVEDLAAVWCEWAEMELRQQQFEAALKLMQRATAMPKRKIAYYDDTETVQARLHRSLKVWSMYADLEESFGTFKTCKAVYERIIDLKICTPQIIINYGMFLEEHNYFEEAYRAYEKGISLFKWPNVYDIWNSYLTKFLERYGGTKLERARDLFEQCLDQCPPEHAKYFYLLYAKLEEEHGLARHAMSVYDRATSAVKEDEMFDMYNIFIKKAAEIYGLPRTREIYEKAIESLPEQNMRHMCVKFAELETKLGEVDRARAIYAHCSQVCDPRITADFWQTWKEFEVRHGNEDTMREMLRIKRSVQATYNTQVNMMAAQFLSTNNGAAADAGAGAGPDAMRLLEEKARQAAAESKQKPIEKAASNIMFVRGETQGGAKDKKDTVVNPDEIDIGDSDEDDEEEDDDEENEMTNENQASAAVTKTDEEGLVMKKLRFEQKAIPAKVFGSLKPSNQGDSDGE</sequence>
<keyword id="KW-0507">mRNA processing</keyword>
<keyword id="KW-0508">mRNA splicing</keyword>
<keyword id="KW-0539">Nucleus</keyword>
<keyword id="KW-1185">Reference proteome</keyword>
<keyword id="KW-0677">Repeat</keyword>
<keyword id="KW-0747">Spliceosome</keyword>
<name>SYF1_DROME</name>
<feature type="chain" id="PRO_0000447890" description="Pre-mRNA-splicing factor syf1 homolog">
    <location>
        <begin position="1"/>
        <end position="883"/>
    </location>
</feature>
<feature type="repeat" description="HAT 1" evidence="2">
    <location>
        <begin position="13"/>
        <end position="45"/>
    </location>
</feature>
<feature type="repeat" description="HAT 2" evidence="2">
    <location>
        <begin position="46"/>
        <end position="78"/>
    </location>
</feature>
<feature type="repeat" description="HAT 3" evidence="2">
    <location>
        <begin position="88"/>
        <end position="120"/>
    </location>
</feature>
<feature type="repeat" description="HAT 4" evidence="2">
    <location>
        <begin position="122"/>
        <end position="156"/>
    </location>
</feature>
<feature type="repeat" description="HAT 5" evidence="2">
    <location>
        <begin position="158"/>
        <end position="190"/>
    </location>
</feature>
<feature type="repeat" description="HAT 6" evidence="2">
    <location>
        <begin position="268"/>
        <end position="303"/>
    </location>
</feature>
<feature type="repeat" description="HAT 7" evidence="2">
    <location>
        <begin position="368"/>
        <end position="406"/>
    </location>
</feature>
<feature type="repeat" description="HAT 8" evidence="2">
    <location>
        <begin position="463"/>
        <end position="495"/>
    </location>
</feature>
<feature type="repeat" description="HAT 9" evidence="2">
    <location>
        <begin position="531"/>
        <end position="565"/>
    </location>
</feature>
<feature type="repeat" description="HAT 10" evidence="2">
    <location>
        <begin position="570"/>
        <end position="604"/>
    </location>
</feature>
<feature type="repeat" description="HAT 11" evidence="2">
    <location>
        <begin position="642"/>
        <end position="676"/>
    </location>
</feature>
<feature type="repeat" description="HAT 12" evidence="2">
    <location>
        <begin position="678"/>
        <end position="712"/>
    </location>
</feature>
<feature type="region of interest" description="Disordered" evidence="3">
    <location>
        <begin position="794"/>
        <end position="851"/>
    </location>
</feature>
<feature type="region of interest" description="Disordered" evidence="3">
    <location>
        <begin position="864"/>
        <end position="883"/>
    </location>
</feature>
<feature type="compositionally biased region" description="Acidic residues" evidence="3">
    <location>
        <begin position="812"/>
        <end position="834"/>
    </location>
</feature>
<feature type="compositionally biased region" description="Polar residues" evidence="3">
    <location>
        <begin position="835"/>
        <end position="844"/>
    </location>
</feature>
<feature type="compositionally biased region" description="Polar residues" evidence="3">
    <location>
        <begin position="873"/>
        <end position="883"/>
    </location>
</feature>
<feature type="mutagenesis site" description="Embryonic lethal and displays defects in primary tracheal branching and Malpighian morphogenesis. Displays abnormal splicing of zygotic transcripts resulting in qualitative (intron retention) as well as quantitative (transcript abundance) changes in gene expression. Tracheal defects are likely due, at least in part, to the mis-splicing of bnl transcripts. Embryonic Malpighian tubules are shortened and round." evidence="4 6">
    <location>
        <begin position="69"/>
        <end position="883"/>
    </location>
</feature>
<feature type="mutagenesis site" description="H124; embryonic lethal and displays defects in primary tracheal branching. Tracheal defects are likely due at least in part, to the mis-splicing of bnl transcripts. Earlier developmental processes, such as gastrulation and germband retraction are unaffected." evidence="6">
    <location>
        <begin position="219"/>
        <end position="883"/>
    </location>
</feature>
<feature type="mutagenesis site" description="Fand2; embryos display significant splicing defects in the small zygotic kuk transcript whereas there is no effect on splicing of the large maternal kuk transcript. Reduced protein levels of ISY1/CG9667 but no effect on Prp19." evidence="5">
    <location>
        <begin position="355"/>
        <end position="360"/>
    </location>
</feature>
<feature type="mutagenesis site" description="Fand1; a large subset of zygotic but not maternally encoded pre-mRNAs, including the kuk transcript, display splicing defects. Consequently, maternally controlled oogenesis, such as primordial germ-cell formation and syncytial nuclear divisions, appear normal but during zygotically controlled blastoderm cellularization the cortical nuclei fail to elongate and become mislocalized. Reduced protein levels of ISY1/CG9667 but no effect on Prp19." evidence="5">
    <original>A</original>
    <variation>V</variation>
    <location>
        <position position="401"/>
    </location>
</feature>
<feature type="sequence conflict" description="In Ref. 3; ACO95726." evidence="9" ref="3">
    <original>A</original>
    <variation>V</variation>
    <location>
        <position position="575"/>
    </location>
</feature>
<protein>
    <recommendedName>
        <fullName evidence="1">Pre-mRNA-splicing factor syf1 homolog</fullName>
    </recommendedName>
    <alternativeName>
        <fullName evidence="7">Pre-mRNA-splicing factor fandango</fullName>
    </alternativeName>
    <alternativeName>
        <fullName evidence="8">Protein faint sausage</fullName>
    </alternativeName>
</protein>